<comment type="function">
    <text evidence="1">Catalyzes a trans-dehydration via an enolate intermediate.</text>
</comment>
<comment type="catalytic activity">
    <reaction>
        <text>3-dehydroquinate = 3-dehydroshikimate + H2O</text>
        <dbReference type="Rhea" id="RHEA:21096"/>
        <dbReference type="ChEBI" id="CHEBI:15377"/>
        <dbReference type="ChEBI" id="CHEBI:16630"/>
        <dbReference type="ChEBI" id="CHEBI:32364"/>
        <dbReference type="EC" id="4.2.1.10"/>
    </reaction>
</comment>
<comment type="pathway">
    <text>Metabolic intermediate biosynthesis; chorismate biosynthesis; chorismate from D-erythrose 4-phosphate and phosphoenolpyruvate: step 3/7.</text>
</comment>
<comment type="subunit">
    <text evidence="1">Homododecamer.</text>
</comment>
<comment type="similarity">
    <text evidence="2">Belongs to the type-II 3-dehydroquinase family.</text>
</comment>
<evidence type="ECO:0000250" key="1"/>
<evidence type="ECO:0000305" key="2"/>
<reference key="1">
    <citation type="journal article" date="1995" name="Science">
        <title>Whole-genome random sequencing and assembly of Haemophilus influenzae Rd.</title>
        <authorList>
            <person name="Fleischmann R.D."/>
            <person name="Adams M.D."/>
            <person name="White O."/>
            <person name="Clayton R.A."/>
            <person name="Kirkness E.F."/>
            <person name="Kerlavage A.R."/>
            <person name="Bult C.J."/>
            <person name="Tomb J.-F."/>
            <person name="Dougherty B.A."/>
            <person name="Merrick J.M."/>
            <person name="McKenney K."/>
            <person name="Sutton G.G."/>
            <person name="FitzHugh W."/>
            <person name="Fields C.A."/>
            <person name="Gocayne J.D."/>
            <person name="Scott J.D."/>
            <person name="Shirley R."/>
            <person name="Liu L.-I."/>
            <person name="Glodek A."/>
            <person name="Kelley J.M."/>
            <person name="Weidman J.F."/>
            <person name="Phillips C.A."/>
            <person name="Spriggs T."/>
            <person name="Hedblom E."/>
            <person name="Cotton M.D."/>
            <person name="Utterback T.R."/>
            <person name="Hanna M.C."/>
            <person name="Nguyen D.T."/>
            <person name="Saudek D.M."/>
            <person name="Brandon R.C."/>
            <person name="Fine L.D."/>
            <person name="Fritchman J.L."/>
            <person name="Fuhrmann J.L."/>
            <person name="Geoghagen N.S.M."/>
            <person name="Gnehm C.L."/>
            <person name="McDonald L.A."/>
            <person name="Small K.V."/>
            <person name="Fraser C.M."/>
            <person name="Smith H.O."/>
            <person name="Venter J.C."/>
        </authorList>
    </citation>
    <scope>NUCLEOTIDE SEQUENCE [LARGE SCALE GENOMIC DNA]</scope>
    <source>
        <strain>ATCC 51907 / DSM 11121 / KW20 / Rd</strain>
    </source>
</reference>
<name>AROQ_HAEIN</name>
<accession>P43878</accession>
<gene>
    <name type="primary">aroQ</name>
    <name type="ordered locus">HI_0970</name>
</gene>
<protein>
    <recommendedName>
        <fullName>3-dehydroquinate dehydratase</fullName>
        <shortName>3-dehydroquinase</shortName>
        <ecNumber>4.2.1.10</ecNumber>
    </recommendedName>
    <alternativeName>
        <fullName>Type II DHQase</fullName>
    </alternativeName>
</protein>
<sequence length="149" mass="16766">MSQTHRILLLNGPNLNMLGAREPKHYGSISLESIEEKIQTLATQHNVKVECFQANSEGKLINKIHESFQQVDFILINPAAYTHTSVALRDALLAVSIPFVEIHLSNVHKREPFRHHSYFSDVAEGVICGLGAKGYEFAFLFAMDYLAKK</sequence>
<keyword id="KW-0028">Amino-acid biosynthesis</keyword>
<keyword id="KW-0057">Aromatic amino acid biosynthesis</keyword>
<keyword id="KW-0456">Lyase</keyword>
<keyword id="KW-1185">Reference proteome</keyword>
<organism>
    <name type="scientific">Haemophilus influenzae (strain ATCC 51907 / DSM 11121 / KW20 / Rd)</name>
    <dbReference type="NCBI Taxonomy" id="71421"/>
    <lineage>
        <taxon>Bacteria</taxon>
        <taxon>Pseudomonadati</taxon>
        <taxon>Pseudomonadota</taxon>
        <taxon>Gammaproteobacteria</taxon>
        <taxon>Pasteurellales</taxon>
        <taxon>Pasteurellaceae</taxon>
        <taxon>Haemophilus</taxon>
    </lineage>
</organism>
<dbReference type="EC" id="4.2.1.10"/>
<dbReference type="EMBL" id="L42023">
    <property type="protein sequence ID" value="AAC22627.1"/>
    <property type="molecule type" value="Genomic_DNA"/>
</dbReference>
<dbReference type="PIR" id="D64105">
    <property type="entry name" value="D64105"/>
</dbReference>
<dbReference type="RefSeq" id="NP_439131.1">
    <property type="nucleotide sequence ID" value="NC_000907.1"/>
</dbReference>
<dbReference type="SMR" id="P43878"/>
<dbReference type="STRING" id="71421.HI_0970"/>
<dbReference type="EnsemblBacteria" id="AAC22627">
    <property type="protein sequence ID" value="AAC22627"/>
    <property type="gene ID" value="HI_0970"/>
</dbReference>
<dbReference type="KEGG" id="hin:HI_0970"/>
<dbReference type="PATRIC" id="fig|71421.8.peg.1011"/>
<dbReference type="eggNOG" id="COG0757">
    <property type="taxonomic scope" value="Bacteria"/>
</dbReference>
<dbReference type="HOGENOM" id="CLU_090968_1_0_6"/>
<dbReference type="OrthoDB" id="9790793at2"/>
<dbReference type="PhylomeDB" id="P43878"/>
<dbReference type="BioCyc" id="HINF71421:G1GJ1-1011-MONOMER"/>
<dbReference type="UniPathway" id="UPA00053">
    <property type="reaction ID" value="UER00086"/>
</dbReference>
<dbReference type="Proteomes" id="UP000000579">
    <property type="component" value="Chromosome"/>
</dbReference>
<dbReference type="GO" id="GO:0003855">
    <property type="term" value="F:3-dehydroquinate dehydratase activity"/>
    <property type="evidence" value="ECO:0000318"/>
    <property type="project" value="GO_Central"/>
</dbReference>
<dbReference type="GO" id="GO:0008652">
    <property type="term" value="P:amino acid biosynthetic process"/>
    <property type="evidence" value="ECO:0007669"/>
    <property type="project" value="UniProtKB-KW"/>
</dbReference>
<dbReference type="GO" id="GO:0009073">
    <property type="term" value="P:aromatic amino acid family biosynthetic process"/>
    <property type="evidence" value="ECO:0007669"/>
    <property type="project" value="UniProtKB-KW"/>
</dbReference>
<dbReference type="GO" id="GO:0009423">
    <property type="term" value="P:chorismate biosynthetic process"/>
    <property type="evidence" value="ECO:0007669"/>
    <property type="project" value="UniProtKB-UniRule"/>
</dbReference>
<dbReference type="GO" id="GO:0019631">
    <property type="term" value="P:quinate catabolic process"/>
    <property type="evidence" value="ECO:0000318"/>
    <property type="project" value="GO_Central"/>
</dbReference>
<dbReference type="CDD" id="cd00466">
    <property type="entry name" value="DHQase_II"/>
    <property type="match status" value="1"/>
</dbReference>
<dbReference type="Gene3D" id="3.40.50.9100">
    <property type="entry name" value="Dehydroquinase, class II"/>
    <property type="match status" value="1"/>
</dbReference>
<dbReference type="HAMAP" id="MF_00169">
    <property type="entry name" value="AroQ"/>
    <property type="match status" value="1"/>
</dbReference>
<dbReference type="InterPro" id="IPR001874">
    <property type="entry name" value="DHquinase_II"/>
</dbReference>
<dbReference type="InterPro" id="IPR018509">
    <property type="entry name" value="DHquinase_II_CS"/>
</dbReference>
<dbReference type="InterPro" id="IPR036441">
    <property type="entry name" value="DHquinase_II_sf"/>
</dbReference>
<dbReference type="NCBIfam" id="TIGR01088">
    <property type="entry name" value="aroQ"/>
    <property type="match status" value="1"/>
</dbReference>
<dbReference type="NCBIfam" id="NF003804">
    <property type="entry name" value="PRK05395.1-1"/>
    <property type="match status" value="1"/>
</dbReference>
<dbReference type="NCBIfam" id="NF003805">
    <property type="entry name" value="PRK05395.1-2"/>
    <property type="match status" value="1"/>
</dbReference>
<dbReference type="NCBIfam" id="NF003806">
    <property type="entry name" value="PRK05395.1-3"/>
    <property type="match status" value="1"/>
</dbReference>
<dbReference type="NCBIfam" id="NF003807">
    <property type="entry name" value="PRK05395.1-4"/>
    <property type="match status" value="1"/>
</dbReference>
<dbReference type="PANTHER" id="PTHR21272">
    <property type="entry name" value="CATABOLIC 3-DEHYDROQUINASE"/>
    <property type="match status" value="1"/>
</dbReference>
<dbReference type="PANTHER" id="PTHR21272:SF3">
    <property type="entry name" value="CATABOLIC 3-DEHYDROQUINASE"/>
    <property type="match status" value="1"/>
</dbReference>
<dbReference type="Pfam" id="PF01220">
    <property type="entry name" value="DHquinase_II"/>
    <property type="match status" value="1"/>
</dbReference>
<dbReference type="PIRSF" id="PIRSF001399">
    <property type="entry name" value="DHquinase_II"/>
    <property type="match status" value="1"/>
</dbReference>
<dbReference type="SUPFAM" id="SSF52304">
    <property type="entry name" value="Type II 3-dehydroquinate dehydratase"/>
    <property type="match status" value="1"/>
</dbReference>
<dbReference type="PROSITE" id="PS01029">
    <property type="entry name" value="DEHYDROQUINASE_II"/>
    <property type="match status" value="1"/>
</dbReference>
<feature type="chain" id="PRO_0000159903" description="3-dehydroquinate dehydratase">
    <location>
        <begin position="1"/>
        <end position="149"/>
    </location>
</feature>
<feature type="active site" description="Proton acceptor" evidence="1">
    <location>
        <position position="26"/>
    </location>
</feature>
<feature type="active site" description="Proton donor" evidence="1">
    <location>
        <position position="103"/>
    </location>
</feature>
<feature type="binding site" evidence="1">
    <location>
        <position position="77"/>
    </location>
    <ligand>
        <name>substrate</name>
    </ligand>
</feature>
<feature type="binding site" evidence="1">
    <location>
        <position position="83"/>
    </location>
    <ligand>
        <name>substrate</name>
    </ligand>
</feature>
<feature type="binding site" evidence="1">
    <location>
        <position position="90"/>
    </location>
    <ligand>
        <name>substrate</name>
    </ligand>
</feature>
<feature type="binding site" evidence="1">
    <location>
        <begin position="104"/>
        <end position="105"/>
    </location>
    <ligand>
        <name>substrate</name>
    </ligand>
</feature>
<feature type="binding site" evidence="1">
    <location>
        <position position="114"/>
    </location>
    <ligand>
        <name>substrate</name>
    </ligand>
</feature>
<feature type="site" description="Transition state stabilizer" evidence="1">
    <location>
        <position position="21"/>
    </location>
</feature>
<proteinExistence type="inferred from homology"/>